<evidence type="ECO:0000255" key="1">
    <source>
        <dbReference type="PROSITE-ProRule" id="PRU00253"/>
    </source>
</evidence>
<evidence type="ECO:0000305" key="2"/>
<proteinExistence type="inferred from homology"/>
<comment type="similarity">
    <text evidence="2">Belongs to the LysR transcriptional regulatory family.</text>
</comment>
<keyword id="KW-0238">DNA-binding</keyword>
<keyword id="KW-1185">Reference proteome</keyword>
<keyword id="KW-0804">Transcription</keyword>
<keyword id="KW-0805">Transcription regulation</keyword>
<reference key="1">
    <citation type="journal article" date="1996" name="FEMS Microbiol. Lett.">
        <title>Expression of a pepT homologue from Bacillus subtilis.</title>
        <authorList>
            <person name="Schroegel O."/>
            <person name="Krispin O."/>
            <person name="Allmansberger R."/>
        </authorList>
    </citation>
    <scope>NUCLEOTIDE SEQUENCE [GENOMIC DNA]</scope>
    <source>
        <strain>168</strain>
    </source>
</reference>
<reference key="2">
    <citation type="journal article" date="1996" name="Microbiology">
        <title>Sequencing of a 65 kb region of the Bacillus subtilis genome containing the lic and cel loci, and creation of a 177 kb contig covering the gnt-sacXY region.</title>
        <authorList>
            <person name="Yoshida K."/>
            <person name="Shindo K."/>
            <person name="Sano H."/>
            <person name="Seki S."/>
            <person name="Fujimura M."/>
            <person name="Yanai N."/>
            <person name="Miwa Y."/>
            <person name="Fujita Y."/>
        </authorList>
    </citation>
    <scope>NUCLEOTIDE SEQUENCE [GENOMIC DNA]</scope>
    <source>
        <strain>168 / BGSC1A1</strain>
    </source>
</reference>
<reference key="3">
    <citation type="journal article" date="1997" name="Nature">
        <title>The complete genome sequence of the Gram-positive bacterium Bacillus subtilis.</title>
        <authorList>
            <person name="Kunst F."/>
            <person name="Ogasawara N."/>
            <person name="Moszer I."/>
            <person name="Albertini A.M."/>
            <person name="Alloni G."/>
            <person name="Azevedo V."/>
            <person name="Bertero M.G."/>
            <person name="Bessieres P."/>
            <person name="Bolotin A."/>
            <person name="Borchert S."/>
            <person name="Borriss R."/>
            <person name="Boursier L."/>
            <person name="Brans A."/>
            <person name="Braun M."/>
            <person name="Brignell S.C."/>
            <person name="Bron S."/>
            <person name="Brouillet S."/>
            <person name="Bruschi C.V."/>
            <person name="Caldwell B."/>
            <person name="Capuano V."/>
            <person name="Carter N.M."/>
            <person name="Choi S.-K."/>
            <person name="Codani J.-J."/>
            <person name="Connerton I.F."/>
            <person name="Cummings N.J."/>
            <person name="Daniel R.A."/>
            <person name="Denizot F."/>
            <person name="Devine K.M."/>
            <person name="Duesterhoeft A."/>
            <person name="Ehrlich S.D."/>
            <person name="Emmerson P.T."/>
            <person name="Entian K.-D."/>
            <person name="Errington J."/>
            <person name="Fabret C."/>
            <person name="Ferrari E."/>
            <person name="Foulger D."/>
            <person name="Fritz C."/>
            <person name="Fujita M."/>
            <person name="Fujita Y."/>
            <person name="Fuma S."/>
            <person name="Galizzi A."/>
            <person name="Galleron N."/>
            <person name="Ghim S.-Y."/>
            <person name="Glaser P."/>
            <person name="Goffeau A."/>
            <person name="Golightly E.J."/>
            <person name="Grandi G."/>
            <person name="Guiseppi G."/>
            <person name="Guy B.J."/>
            <person name="Haga K."/>
            <person name="Haiech J."/>
            <person name="Harwood C.R."/>
            <person name="Henaut A."/>
            <person name="Hilbert H."/>
            <person name="Holsappel S."/>
            <person name="Hosono S."/>
            <person name="Hullo M.-F."/>
            <person name="Itaya M."/>
            <person name="Jones L.-M."/>
            <person name="Joris B."/>
            <person name="Karamata D."/>
            <person name="Kasahara Y."/>
            <person name="Klaerr-Blanchard M."/>
            <person name="Klein C."/>
            <person name="Kobayashi Y."/>
            <person name="Koetter P."/>
            <person name="Koningstein G."/>
            <person name="Krogh S."/>
            <person name="Kumano M."/>
            <person name="Kurita K."/>
            <person name="Lapidus A."/>
            <person name="Lardinois S."/>
            <person name="Lauber J."/>
            <person name="Lazarevic V."/>
            <person name="Lee S.-M."/>
            <person name="Levine A."/>
            <person name="Liu H."/>
            <person name="Masuda S."/>
            <person name="Mauel C."/>
            <person name="Medigue C."/>
            <person name="Medina N."/>
            <person name="Mellado R.P."/>
            <person name="Mizuno M."/>
            <person name="Moestl D."/>
            <person name="Nakai S."/>
            <person name="Noback M."/>
            <person name="Noone D."/>
            <person name="O'Reilly M."/>
            <person name="Ogawa K."/>
            <person name="Ogiwara A."/>
            <person name="Oudega B."/>
            <person name="Park S.-H."/>
            <person name="Parro V."/>
            <person name="Pohl T.M."/>
            <person name="Portetelle D."/>
            <person name="Porwollik S."/>
            <person name="Prescott A.M."/>
            <person name="Presecan E."/>
            <person name="Pujic P."/>
            <person name="Purnelle B."/>
            <person name="Rapoport G."/>
            <person name="Rey M."/>
            <person name="Reynolds S."/>
            <person name="Rieger M."/>
            <person name="Rivolta C."/>
            <person name="Rocha E."/>
            <person name="Roche B."/>
            <person name="Rose M."/>
            <person name="Sadaie Y."/>
            <person name="Sato T."/>
            <person name="Scanlan E."/>
            <person name="Schleich S."/>
            <person name="Schroeter R."/>
            <person name="Scoffone F."/>
            <person name="Sekiguchi J."/>
            <person name="Sekowska A."/>
            <person name="Seror S.J."/>
            <person name="Serror P."/>
            <person name="Shin B.-S."/>
            <person name="Soldo B."/>
            <person name="Sorokin A."/>
            <person name="Tacconi E."/>
            <person name="Takagi T."/>
            <person name="Takahashi H."/>
            <person name="Takemaru K."/>
            <person name="Takeuchi M."/>
            <person name="Tamakoshi A."/>
            <person name="Tanaka T."/>
            <person name="Terpstra P."/>
            <person name="Tognoni A."/>
            <person name="Tosato V."/>
            <person name="Uchiyama S."/>
            <person name="Vandenbol M."/>
            <person name="Vannier F."/>
            <person name="Vassarotti A."/>
            <person name="Viari A."/>
            <person name="Wambutt R."/>
            <person name="Wedler E."/>
            <person name="Wedler H."/>
            <person name="Weitzenegger T."/>
            <person name="Winters P."/>
            <person name="Wipat A."/>
            <person name="Yamamoto H."/>
            <person name="Yamane K."/>
            <person name="Yasumoto K."/>
            <person name="Yata K."/>
            <person name="Yoshida K."/>
            <person name="Yoshikawa H.-F."/>
            <person name="Zumstein E."/>
            <person name="Yoshikawa H."/>
            <person name="Danchin A."/>
        </authorList>
    </citation>
    <scope>NUCLEOTIDE SEQUENCE [LARGE SCALE GENOMIC DNA]</scope>
    <source>
        <strain>168</strain>
    </source>
</reference>
<gene>
    <name type="primary">yxjO</name>
    <name type="ordered locus">BSU38880</name>
</gene>
<name>YXJO_BACSU</name>
<dbReference type="EMBL" id="X99339">
    <property type="protein sequence ID" value="CAA67714.1"/>
    <property type="molecule type" value="Genomic_DNA"/>
</dbReference>
<dbReference type="EMBL" id="D83026">
    <property type="protein sequence ID" value="BAA11716.1"/>
    <property type="molecule type" value="Genomic_DNA"/>
</dbReference>
<dbReference type="EMBL" id="AL009126">
    <property type="protein sequence ID" value="CAB15914.1"/>
    <property type="molecule type" value="Genomic_DNA"/>
</dbReference>
<dbReference type="PIR" id="D70080">
    <property type="entry name" value="D70080"/>
</dbReference>
<dbReference type="RefSeq" id="NP_391767.1">
    <property type="nucleotide sequence ID" value="NC_000964.3"/>
</dbReference>
<dbReference type="RefSeq" id="WP_003242654.1">
    <property type="nucleotide sequence ID" value="NZ_OZ025638.1"/>
</dbReference>
<dbReference type="SMR" id="P55181"/>
<dbReference type="FunCoup" id="P55181">
    <property type="interactions" value="181"/>
</dbReference>
<dbReference type="STRING" id="224308.BSU38880"/>
<dbReference type="PaxDb" id="224308-BSU38880"/>
<dbReference type="EnsemblBacteria" id="CAB15914">
    <property type="protein sequence ID" value="CAB15914"/>
    <property type="gene ID" value="BSU_38880"/>
</dbReference>
<dbReference type="GeneID" id="937423"/>
<dbReference type="KEGG" id="bsu:BSU38880"/>
<dbReference type="PATRIC" id="fig|224308.179.peg.4207"/>
<dbReference type="eggNOG" id="COG0583">
    <property type="taxonomic scope" value="Bacteria"/>
</dbReference>
<dbReference type="InParanoid" id="P55181"/>
<dbReference type="OrthoDB" id="9785745at2"/>
<dbReference type="PhylomeDB" id="P55181"/>
<dbReference type="BioCyc" id="BSUB:BSU38880-MONOMER"/>
<dbReference type="Proteomes" id="UP000001570">
    <property type="component" value="Chromosome"/>
</dbReference>
<dbReference type="GO" id="GO:0003700">
    <property type="term" value="F:DNA-binding transcription factor activity"/>
    <property type="evidence" value="ECO:0007669"/>
    <property type="project" value="InterPro"/>
</dbReference>
<dbReference type="GO" id="GO:0000976">
    <property type="term" value="F:transcription cis-regulatory region binding"/>
    <property type="evidence" value="ECO:0000318"/>
    <property type="project" value="GO_Central"/>
</dbReference>
<dbReference type="GO" id="GO:0006355">
    <property type="term" value="P:regulation of DNA-templated transcription"/>
    <property type="evidence" value="ECO:0000318"/>
    <property type="project" value="GO_Central"/>
</dbReference>
<dbReference type="CDD" id="cd05466">
    <property type="entry name" value="PBP2_LTTR_substrate"/>
    <property type="match status" value="1"/>
</dbReference>
<dbReference type="FunFam" id="1.10.10.10:FF:000001">
    <property type="entry name" value="LysR family transcriptional regulator"/>
    <property type="match status" value="1"/>
</dbReference>
<dbReference type="Gene3D" id="3.40.190.290">
    <property type="match status" value="1"/>
</dbReference>
<dbReference type="Gene3D" id="1.10.10.10">
    <property type="entry name" value="Winged helix-like DNA-binding domain superfamily/Winged helix DNA-binding domain"/>
    <property type="match status" value="1"/>
</dbReference>
<dbReference type="InterPro" id="IPR005119">
    <property type="entry name" value="LysR_subst-bd"/>
</dbReference>
<dbReference type="InterPro" id="IPR000847">
    <property type="entry name" value="Tscrpt_reg_HTH_LysR"/>
</dbReference>
<dbReference type="InterPro" id="IPR036388">
    <property type="entry name" value="WH-like_DNA-bd_sf"/>
</dbReference>
<dbReference type="InterPro" id="IPR036390">
    <property type="entry name" value="WH_DNA-bd_sf"/>
</dbReference>
<dbReference type="PANTHER" id="PTHR30126">
    <property type="entry name" value="HTH-TYPE TRANSCRIPTIONAL REGULATOR"/>
    <property type="match status" value="1"/>
</dbReference>
<dbReference type="PANTHER" id="PTHR30126:SF64">
    <property type="entry name" value="HTH-TYPE TRANSCRIPTIONAL REGULATOR CITR"/>
    <property type="match status" value="1"/>
</dbReference>
<dbReference type="Pfam" id="PF00126">
    <property type="entry name" value="HTH_1"/>
    <property type="match status" value="1"/>
</dbReference>
<dbReference type="Pfam" id="PF03466">
    <property type="entry name" value="LysR_substrate"/>
    <property type="match status" value="1"/>
</dbReference>
<dbReference type="PRINTS" id="PR00039">
    <property type="entry name" value="HTHLYSR"/>
</dbReference>
<dbReference type="SUPFAM" id="SSF53850">
    <property type="entry name" value="Periplasmic binding protein-like II"/>
    <property type="match status" value="1"/>
</dbReference>
<dbReference type="SUPFAM" id="SSF46785">
    <property type="entry name" value="Winged helix' DNA-binding domain"/>
    <property type="match status" value="1"/>
</dbReference>
<dbReference type="PROSITE" id="PS50931">
    <property type="entry name" value="HTH_LYSR"/>
    <property type="match status" value="1"/>
</dbReference>
<feature type="chain" id="PRO_0000105825" description="Uncharacterized HTH-type transcriptional regulator YxjO">
    <location>
        <begin position="1"/>
        <end position="291"/>
    </location>
</feature>
<feature type="domain" description="HTH lysR-type" evidence="1">
    <location>
        <begin position="1"/>
        <end position="58"/>
    </location>
</feature>
<feature type="DNA-binding region" description="H-T-H motif" evidence="1">
    <location>
        <begin position="18"/>
        <end position="37"/>
    </location>
</feature>
<sequence>MDLKWLQTFIAAAESESFREAAEHLYLTQPAVSQHMRKLEDELDMRLFLHSGRRVVLTDEGRLFLPYAKEMIHVYQAGKQKVSQWKQGYSRSLTLAVHPYIASYILPRFLPAYIQKHPHVELSTHVAGSDAIKQAVEHNEADIGLSRKDPNTNTLYYQHICEGTLCLAAPFQESRPDAASVLTRYRLLTHDHPSYGDAFLDNIRSHYPYLQMMAVGQTDTAVHMMKAGMGASFLPTYIIKQEEAEKKLMAVSTPAHLELPASQTFMMWKRNSEDIQHFHAMLHDFMQREQV</sequence>
<accession>P55181</accession>
<organism>
    <name type="scientific">Bacillus subtilis (strain 168)</name>
    <dbReference type="NCBI Taxonomy" id="224308"/>
    <lineage>
        <taxon>Bacteria</taxon>
        <taxon>Bacillati</taxon>
        <taxon>Bacillota</taxon>
        <taxon>Bacilli</taxon>
        <taxon>Bacillales</taxon>
        <taxon>Bacillaceae</taxon>
        <taxon>Bacillus</taxon>
    </lineage>
</organism>
<protein>
    <recommendedName>
        <fullName>Uncharacterized HTH-type transcriptional regulator YxjO</fullName>
    </recommendedName>
</protein>